<name>RPO12_PYRNV</name>
<organism>
    <name type="scientific">Pyrobaculum neutrophilum (strain DSM 2338 / JCM 9278 / NBRC 100436 / V24Sta)</name>
    <name type="common">Thermoproteus neutrophilus</name>
    <dbReference type="NCBI Taxonomy" id="444157"/>
    <lineage>
        <taxon>Archaea</taxon>
        <taxon>Thermoproteota</taxon>
        <taxon>Thermoprotei</taxon>
        <taxon>Thermoproteales</taxon>
        <taxon>Thermoproteaceae</taxon>
        <taxon>Pyrobaculum</taxon>
    </lineage>
</organism>
<accession>B1Y9C5</accession>
<reference key="1">
    <citation type="submission" date="2008-03" db="EMBL/GenBank/DDBJ databases">
        <title>Complete sequence of Thermoproteus neutrophilus V24Sta.</title>
        <authorList>
            <consortium name="US DOE Joint Genome Institute"/>
            <person name="Copeland A."/>
            <person name="Lucas S."/>
            <person name="Lapidus A."/>
            <person name="Glavina del Rio T."/>
            <person name="Dalin E."/>
            <person name="Tice H."/>
            <person name="Bruce D."/>
            <person name="Goodwin L."/>
            <person name="Pitluck S."/>
            <person name="Sims D."/>
            <person name="Brettin T."/>
            <person name="Detter J.C."/>
            <person name="Han C."/>
            <person name="Kuske C.R."/>
            <person name="Schmutz J."/>
            <person name="Larimer F."/>
            <person name="Land M."/>
            <person name="Hauser L."/>
            <person name="Kyrpides N."/>
            <person name="Mikhailova N."/>
            <person name="Biddle J.F."/>
            <person name="Zhang Z."/>
            <person name="Fitz-Gibbon S.T."/>
            <person name="Lowe T.M."/>
            <person name="Saltikov C."/>
            <person name="House C.H."/>
            <person name="Richardson P."/>
        </authorList>
    </citation>
    <scope>NUCLEOTIDE SEQUENCE [LARGE SCALE GENOMIC DNA]</scope>
    <source>
        <strain>DSM 2338 / JCM 9278 / NBRC 100436 / V24Sta</strain>
    </source>
</reference>
<proteinExistence type="inferred from homology"/>
<keyword id="KW-0963">Cytoplasm</keyword>
<keyword id="KW-0240">DNA-directed RNA polymerase</keyword>
<keyword id="KW-0479">Metal-binding</keyword>
<keyword id="KW-0548">Nucleotidyltransferase</keyword>
<keyword id="KW-0804">Transcription</keyword>
<keyword id="KW-0808">Transferase</keyword>
<keyword id="KW-0862">Zinc</keyword>
<sequence length="52" mass="6122">MAEERKLYMCMRCGRVFSKPEMEILPGIRCPYCNFKIIMKVRSPTVKRIPAV</sequence>
<comment type="function">
    <text evidence="1">DNA-dependent RNA polymerase (RNAP) catalyzes the transcription of DNA into RNA using the four ribonucleoside triphosphates as substrates.</text>
</comment>
<comment type="catalytic activity">
    <reaction evidence="1">
        <text>RNA(n) + a ribonucleoside 5'-triphosphate = RNA(n+1) + diphosphate</text>
        <dbReference type="Rhea" id="RHEA:21248"/>
        <dbReference type="Rhea" id="RHEA-COMP:14527"/>
        <dbReference type="Rhea" id="RHEA-COMP:17342"/>
        <dbReference type="ChEBI" id="CHEBI:33019"/>
        <dbReference type="ChEBI" id="CHEBI:61557"/>
        <dbReference type="ChEBI" id="CHEBI:140395"/>
        <dbReference type="EC" id="2.7.7.6"/>
    </reaction>
</comment>
<comment type="cofactor">
    <cofactor evidence="1">
        <name>Zn(2+)</name>
        <dbReference type="ChEBI" id="CHEBI:29105"/>
    </cofactor>
    <text evidence="1">Binds 1 zinc ion.</text>
</comment>
<comment type="subunit">
    <text evidence="1">Part of the RNA polymerase complex.</text>
</comment>
<comment type="subcellular location">
    <subcellularLocation>
        <location evidence="1">Cytoplasm</location>
    </subcellularLocation>
</comment>
<comment type="similarity">
    <text evidence="1">Belongs to the archaeal Rpo12/eukaryotic RPC10 RNA polymerase subunit family.</text>
</comment>
<evidence type="ECO:0000255" key="1">
    <source>
        <dbReference type="HAMAP-Rule" id="MF_00615"/>
    </source>
</evidence>
<feature type="chain" id="PRO_1000130408" description="DNA-directed RNA polymerase subunit Rpo12">
    <location>
        <begin position="1"/>
        <end position="52"/>
    </location>
</feature>
<feature type="binding site" evidence="1">
    <location>
        <position position="13"/>
    </location>
    <ligand>
        <name>Zn(2+)</name>
        <dbReference type="ChEBI" id="CHEBI:29105"/>
    </ligand>
</feature>
<feature type="binding site" evidence="1">
    <location>
        <position position="30"/>
    </location>
    <ligand>
        <name>Zn(2+)</name>
        <dbReference type="ChEBI" id="CHEBI:29105"/>
    </ligand>
</feature>
<feature type="binding site" evidence="1">
    <location>
        <position position="33"/>
    </location>
    <ligand>
        <name>Zn(2+)</name>
        <dbReference type="ChEBI" id="CHEBI:29105"/>
    </ligand>
</feature>
<gene>
    <name evidence="1" type="primary">rpo12</name>
    <name evidence="1" type="synonym">rpoP</name>
    <name type="ordered locus">Tneu_1429</name>
</gene>
<dbReference type="EC" id="2.7.7.6" evidence="1"/>
<dbReference type="EMBL" id="CP001014">
    <property type="protein sequence ID" value="ACB40354.1"/>
    <property type="molecule type" value="Genomic_DNA"/>
</dbReference>
<dbReference type="RefSeq" id="WP_012350773.1">
    <property type="nucleotide sequence ID" value="NC_010525.1"/>
</dbReference>
<dbReference type="SMR" id="B1Y9C5"/>
<dbReference type="STRING" id="444157.Tneu_1429"/>
<dbReference type="GeneID" id="6164342"/>
<dbReference type="KEGG" id="tne:Tneu_1429"/>
<dbReference type="eggNOG" id="arCOG04341">
    <property type="taxonomic scope" value="Archaea"/>
</dbReference>
<dbReference type="HOGENOM" id="CLU_179456_2_0_2"/>
<dbReference type="OrthoDB" id="129238at2157"/>
<dbReference type="Proteomes" id="UP000001694">
    <property type="component" value="Chromosome"/>
</dbReference>
<dbReference type="GO" id="GO:0005737">
    <property type="term" value="C:cytoplasm"/>
    <property type="evidence" value="ECO:0007669"/>
    <property type="project" value="UniProtKB-SubCell"/>
</dbReference>
<dbReference type="GO" id="GO:0000428">
    <property type="term" value="C:DNA-directed RNA polymerase complex"/>
    <property type="evidence" value="ECO:0007669"/>
    <property type="project" value="UniProtKB-KW"/>
</dbReference>
<dbReference type="GO" id="GO:0003677">
    <property type="term" value="F:DNA binding"/>
    <property type="evidence" value="ECO:0007669"/>
    <property type="project" value="InterPro"/>
</dbReference>
<dbReference type="GO" id="GO:0003899">
    <property type="term" value="F:DNA-directed RNA polymerase activity"/>
    <property type="evidence" value="ECO:0007669"/>
    <property type="project" value="UniProtKB-UniRule"/>
</dbReference>
<dbReference type="GO" id="GO:0008270">
    <property type="term" value="F:zinc ion binding"/>
    <property type="evidence" value="ECO:0007669"/>
    <property type="project" value="UniProtKB-UniRule"/>
</dbReference>
<dbReference type="GO" id="GO:0006351">
    <property type="term" value="P:DNA-templated transcription"/>
    <property type="evidence" value="ECO:0007669"/>
    <property type="project" value="UniProtKB-UniRule"/>
</dbReference>
<dbReference type="Gene3D" id="2.20.28.30">
    <property type="entry name" value="RNA polymerase ii, chain L"/>
    <property type="match status" value="1"/>
</dbReference>
<dbReference type="HAMAP" id="MF_00615">
    <property type="entry name" value="RNApol_arch_Rpo12"/>
    <property type="match status" value="1"/>
</dbReference>
<dbReference type="InterPro" id="IPR006591">
    <property type="entry name" value="RNAP_P/RPABC4"/>
</dbReference>
<dbReference type="InterPro" id="IPR029040">
    <property type="entry name" value="RPABC4/Spt4"/>
</dbReference>
<dbReference type="InterPro" id="IPR023464">
    <property type="entry name" value="Rpo12"/>
</dbReference>
<dbReference type="SMART" id="SM00659">
    <property type="entry name" value="RPOLCX"/>
    <property type="match status" value="1"/>
</dbReference>
<dbReference type="SUPFAM" id="SSF63393">
    <property type="entry name" value="RNA polymerase subunits"/>
    <property type="match status" value="1"/>
</dbReference>
<protein>
    <recommendedName>
        <fullName evidence="1">DNA-directed RNA polymerase subunit Rpo12</fullName>
        <ecNumber evidence="1">2.7.7.6</ecNumber>
    </recommendedName>
    <alternativeName>
        <fullName evidence="1">DNA-directed RNA polymerase subunit P</fullName>
    </alternativeName>
</protein>